<gene>
    <name evidence="1" type="primary">hfq</name>
    <name type="ordered locus">CJA_3079</name>
</gene>
<proteinExistence type="inferred from homology"/>
<keyword id="KW-1185">Reference proteome</keyword>
<keyword id="KW-0694">RNA-binding</keyword>
<keyword id="KW-0346">Stress response</keyword>
<evidence type="ECO:0000255" key="1">
    <source>
        <dbReference type="HAMAP-Rule" id="MF_00436"/>
    </source>
</evidence>
<evidence type="ECO:0000255" key="2">
    <source>
        <dbReference type="PROSITE-ProRule" id="PRU01346"/>
    </source>
</evidence>
<reference key="1">
    <citation type="journal article" date="2008" name="J. Bacteriol.">
        <title>Insights into plant cell wall degradation from the genome sequence of the soil bacterium Cellvibrio japonicus.</title>
        <authorList>
            <person name="DeBoy R.T."/>
            <person name="Mongodin E.F."/>
            <person name="Fouts D.E."/>
            <person name="Tailford L.E."/>
            <person name="Khouri H."/>
            <person name="Emerson J.B."/>
            <person name="Mohamoud Y."/>
            <person name="Watkins K."/>
            <person name="Henrissat B."/>
            <person name="Gilbert H.J."/>
            <person name="Nelson K.E."/>
        </authorList>
    </citation>
    <scope>NUCLEOTIDE SEQUENCE [LARGE SCALE GENOMIC DNA]</scope>
    <source>
        <strain>Ueda107</strain>
    </source>
</reference>
<sequence length="88" mass="9752">MSKGHSLQDPYLNVLRKERVPVSIYLVNGIKLQGQVESFDQFVVLLKNTVSQMVYKHAISTVVPSRAVRVPLLNEAGGAEGEEDEQAE</sequence>
<dbReference type="EMBL" id="CP000934">
    <property type="protein sequence ID" value="ACE86363.1"/>
    <property type="molecule type" value="Genomic_DNA"/>
</dbReference>
<dbReference type="RefSeq" id="WP_012488657.1">
    <property type="nucleotide sequence ID" value="NC_010995.1"/>
</dbReference>
<dbReference type="SMR" id="B3PDC1"/>
<dbReference type="STRING" id="498211.CJA_3079"/>
<dbReference type="KEGG" id="cja:CJA_3079"/>
<dbReference type="eggNOG" id="COG1923">
    <property type="taxonomic scope" value="Bacteria"/>
</dbReference>
<dbReference type="HOGENOM" id="CLU_113688_2_2_6"/>
<dbReference type="OrthoDB" id="9799751at2"/>
<dbReference type="Proteomes" id="UP000001036">
    <property type="component" value="Chromosome"/>
</dbReference>
<dbReference type="GO" id="GO:0005829">
    <property type="term" value="C:cytosol"/>
    <property type="evidence" value="ECO:0007669"/>
    <property type="project" value="TreeGrafter"/>
</dbReference>
<dbReference type="GO" id="GO:0003723">
    <property type="term" value="F:RNA binding"/>
    <property type="evidence" value="ECO:0007669"/>
    <property type="project" value="UniProtKB-UniRule"/>
</dbReference>
<dbReference type="GO" id="GO:0006355">
    <property type="term" value="P:regulation of DNA-templated transcription"/>
    <property type="evidence" value="ECO:0007669"/>
    <property type="project" value="InterPro"/>
</dbReference>
<dbReference type="GO" id="GO:0043487">
    <property type="term" value="P:regulation of RNA stability"/>
    <property type="evidence" value="ECO:0007669"/>
    <property type="project" value="TreeGrafter"/>
</dbReference>
<dbReference type="GO" id="GO:0045974">
    <property type="term" value="P:regulation of translation, ncRNA-mediated"/>
    <property type="evidence" value="ECO:0007669"/>
    <property type="project" value="TreeGrafter"/>
</dbReference>
<dbReference type="CDD" id="cd01716">
    <property type="entry name" value="Hfq"/>
    <property type="match status" value="1"/>
</dbReference>
<dbReference type="FunFam" id="2.30.30.100:FF:000001">
    <property type="entry name" value="RNA-binding protein Hfq"/>
    <property type="match status" value="1"/>
</dbReference>
<dbReference type="Gene3D" id="2.30.30.100">
    <property type="match status" value="1"/>
</dbReference>
<dbReference type="HAMAP" id="MF_00436">
    <property type="entry name" value="Hfq"/>
    <property type="match status" value="1"/>
</dbReference>
<dbReference type="InterPro" id="IPR005001">
    <property type="entry name" value="Hfq"/>
</dbReference>
<dbReference type="InterPro" id="IPR010920">
    <property type="entry name" value="LSM_dom_sf"/>
</dbReference>
<dbReference type="InterPro" id="IPR047575">
    <property type="entry name" value="Sm"/>
</dbReference>
<dbReference type="NCBIfam" id="TIGR02383">
    <property type="entry name" value="Hfq"/>
    <property type="match status" value="1"/>
</dbReference>
<dbReference type="NCBIfam" id="NF001602">
    <property type="entry name" value="PRK00395.1"/>
    <property type="match status" value="1"/>
</dbReference>
<dbReference type="PANTHER" id="PTHR34772">
    <property type="entry name" value="RNA-BINDING PROTEIN HFQ"/>
    <property type="match status" value="1"/>
</dbReference>
<dbReference type="PANTHER" id="PTHR34772:SF1">
    <property type="entry name" value="RNA-BINDING PROTEIN HFQ"/>
    <property type="match status" value="1"/>
</dbReference>
<dbReference type="Pfam" id="PF17209">
    <property type="entry name" value="Hfq"/>
    <property type="match status" value="1"/>
</dbReference>
<dbReference type="SUPFAM" id="SSF50182">
    <property type="entry name" value="Sm-like ribonucleoproteins"/>
    <property type="match status" value="1"/>
</dbReference>
<dbReference type="PROSITE" id="PS52002">
    <property type="entry name" value="SM"/>
    <property type="match status" value="1"/>
</dbReference>
<organism>
    <name type="scientific">Cellvibrio japonicus (strain Ueda107)</name>
    <name type="common">Pseudomonas fluorescens subsp. cellulosa</name>
    <dbReference type="NCBI Taxonomy" id="498211"/>
    <lineage>
        <taxon>Bacteria</taxon>
        <taxon>Pseudomonadati</taxon>
        <taxon>Pseudomonadota</taxon>
        <taxon>Gammaproteobacteria</taxon>
        <taxon>Cellvibrionales</taxon>
        <taxon>Cellvibrionaceae</taxon>
        <taxon>Cellvibrio</taxon>
    </lineage>
</organism>
<accession>B3PDC1</accession>
<comment type="function">
    <text evidence="1">RNA chaperone that binds small regulatory RNA (sRNAs) and mRNAs to facilitate mRNA translational regulation in response to envelope stress, environmental stress and changes in metabolite concentrations. Also binds with high specificity to tRNAs.</text>
</comment>
<comment type="subunit">
    <text evidence="1">Homohexamer.</text>
</comment>
<comment type="similarity">
    <text evidence="1">Belongs to the Hfq family.</text>
</comment>
<protein>
    <recommendedName>
        <fullName evidence="1">RNA-binding protein Hfq</fullName>
    </recommendedName>
</protein>
<name>HFQ_CELJU</name>
<feature type="chain" id="PRO_1000190316" description="RNA-binding protein Hfq">
    <location>
        <begin position="1"/>
        <end position="88"/>
    </location>
</feature>
<feature type="domain" description="Sm" evidence="2">
    <location>
        <begin position="9"/>
        <end position="68"/>
    </location>
</feature>